<keyword id="KW-0106">Calcium</keyword>
<keyword id="KW-0119">Carbohydrate metabolism</keyword>
<keyword id="KW-1015">Disulfide bond</keyword>
<keyword id="KW-0325">Glycoprotein</keyword>
<keyword id="KW-0378">Hydrolase</keyword>
<keyword id="KW-0479">Metal-binding</keyword>
<keyword id="KW-0624">Polysaccharide degradation</keyword>
<keyword id="KW-1185">Reference proteome</keyword>
<keyword id="KW-0964">Secreted</keyword>
<keyword id="KW-0719">Serine esterase</keyword>
<keyword id="KW-0732">Signal</keyword>
<keyword id="KW-0858">Xylan degradation</keyword>
<feature type="signal peptide" evidence="4">
    <location>
        <begin position="1"/>
        <end position="18"/>
    </location>
</feature>
<feature type="chain" id="PRO_0000394929" description="Probable feruloyl esterase B-2">
    <location>
        <begin position="19"/>
        <end position="526"/>
    </location>
</feature>
<feature type="active site" description="Acyl-ester intermediate" evidence="2">
    <location>
        <position position="187"/>
    </location>
</feature>
<feature type="active site" description="Charge relay system" evidence="2">
    <location>
        <position position="400"/>
    </location>
</feature>
<feature type="active site" description="Charge relay system" evidence="2">
    <location>
        <position position="440"/>
    </location>
</feature>
<feature type="binding site" evidence="2">
    <location>
        <position position="256"/>
    </location>
    <ligand>
        <name>Ca(2+)</name>
        <dbReference type="ChEBI" id="CHEBI:29108"/>
    </ligand>
</feature>
<feature type="binding site" evidence="2">
    <location>
        <position position="259"/>
    </location>
    <ligand>
        <name>Ca(2+)</name>
        <dbReference type="ChEBI" id="CHEBI:29108"/>
    </ligand>
</feature>
<feature type="binding site" evidence="2">
    <location>
        <position position="261"/>
    </location>
    <ligand>
        <name>Ca(2+)</name>
        <dbReference type="ChEBI" id="CHEBI:29108"/>
    </ligand>
</feature>
<feature type="binding site" evidence="2">
    <location>
        <position position="263"/>
    </location>
    <ligand>
        <name>Ca(2+)</name>
        <dbReference type="ChEBI" id="CHEBI:29108"/>
    </ligand>
</feature>
<feature type="binding site" evidence="2">
    <location>
        <position position="265"/>
    </location>
    <ligand>
        <name>Ca(2+)</name>
        <dbReference type="ChEBI" id="CHEBI:29108"/>
    </ligand>
</feature>
<feature type="glycosylation site" description="N-linked (GlcNAc...) asparagine" evidence="4">
    <location>
        <position position="52"/>
    </location>
</feature>
<feature type="glycosylation site" description="N-linked (GlcNAc...) asparagine" evidence="4">
    <location>
        <position position="137"/>
    </location>
</feature>
<feature type="glycosylation site" description="N-linked (GlcNAc...) asparagine" evidence="4">
    <location>
        <position position="233"/>
    </location>
</feature>
<feature type="glycosylation site" description="N-linked (GlcNAc...) asparagine" evidence="4">
    <location>
        <position position="516"/>
    </location>
</feature>
<feature type="disulfide bond" evidence="2">
    <location>
        <begin position="27"/>
        <end position="74"/>
    </location>
</feature>
<feature type="disulfide bond" evidence="2">
    <location>
        <begin position="62"/>
        <end position="113"/>
    </location>
</feature>
<feature type="disulfide bond" evidence="2">
    <location>
        <begin position="186"/>
        <end position="441"/>
    </location>
</feature>
<feature type="disulfide bond" evidence="2">
    <location>
        <begin position="255"/>
        <end position="272"/>
    </location>
</feature>
<feature type="disulfide bond" evidence="2">
    <location>
        <begin position="281"/>
        <end position="291"/>
    </location>
</feature>
<feature type="disulfide bond" evidence="2">
    <location>
        <begin position="503"/>
        <end position="525"/>
    </location>
</feature>
<proteinExistence type="inferred from homology"/>
<reference key="1">
    <citation type="journal article" date="2005" name="Nature">
        <title>Genomic sequence of the pathogenic and allergenic filamentous fungus Aspergillus fumigatus.</title>
        <authorList>
            <person name="Nierman W.C."/>
            <person name="Pain A."/>
            <person name="Anderson M.J."/>
            <person name="Wortman J.R."/>
            <person name="Kim H.S."/>
            <person name="Arroyo J."/>
            <person name="Berriman M."/>
            <person name="Abe K."/>
            <person name="Archer D.B."/>
            <person name="Bermejo C."/>
            <person name="Bennett J.W."/>
            <person name="Bowyer P."/>
            <person name="Chen D."/>
            <person name="Collins M."/>
            <person name="Coulsen R."/>
            <person name="Davies R."/>
            <person name="Dyer P.S."/>
            <person name="Farman M.L."/>
            <person name="Fedorova N."/>
            <person name="Fedorova N.D."/>
            <person name="Feldblyum T.V."/>
            <person name="Fischer R."/>
            <person name="Fosker N."/>
            <person name="Fraser A."/>
            <person name="Garcia J.L."/>
            <person name="Garcia M.J."/>
            <person name="Goble A."/>
            <person name="Goldman G.H."/>
            <person name="Gomi K."/>
            <person name="Griffith-Jones S."/>
            <person name="Gwilliam R."/>
            <person name="Haas B.J."/>
            <person name="Haas H."/>
            <person name="Harris D.E."/>
            <person name="Horiuchi H."/>
            <person name="Huang J."/>
            <person name="Humphray S."/>
            <person name="Jimenez J."/>
            <person name="Keller N."/>
            <person name="Khouri H."/>
            <person name="Kitamoto K."/>
            <person name="Kobayashi T."/>
            <person name="Konzack S."/>
            <person name="Kulkarni R."/>
            <person name="Kumagai T."/>
            <person name="Lafton A."/>
            <person name="Latge J.-P."/>
            <person name="Li W."/>
            <person name="Lord A."/>
            <person name="Lu C."/>
            <person name="Majoros W.H."/>
            <person name="May G.S."/>
            <person name="Miller B.L."/>
            <person name="Mohamoud Y."/>
            <person name="Molina M."/>
            <person name="Monod M."/>
            <person name="Mouyna I."/>
            <person name="Mulligan S."/>
            <person name="Murphy L.D."/>
            <person name="O'Neil S."/>
            <person name="Paulsen I."/>
            <person name="Penalva M.A."/>
            <person name="Pertea M."/>
            <person name="Price C."/>
            <person name="Pritchard B.L."/>
            <person name="Quail M.A."/>
            <person name="Rabbinowitsch E."/>
            <person name="Rawlins N."/>
            <person name="Rajandream M.A."/>
            <person name="Reichard U."/>
            <person name="Renauld H."/>
            <person name="Robson G.D."/>
            <person name="Rodriguez de Cordoba S."/>
            <person name="Rodriguez-Pena J.M."/>
            <person name="Ronning C.M."/>
            <person name="Rutter S."/>
            <person name="Salzberg S.L."/>
            <person name="Sanchez M."/>
            <person name="Sanchez-Ferrero J.C."/>
            <person name="Saunders D."/>
            <person name="Seeger K."/>
            <person name="Squares R."/>
            <person name="Squares S."/>
            <person name="Takeuchi M."/>
            <person name="Tekaia F."/>
            <person name="Turner G."/>
            <person name="Vazquez de Aldana C.R."/>
            <person name="Weidman J."/>
            <person name="White O."/>
            <person name="Woodward J.R."/>
            <person name="Yu J.-H."/>
            <person name="Fraser C.M."/>
            <person name="Galagan J.E."/>
            <person name="Asai K."/>
            <person name="Machida M."/>
            <person name="Hall N."/>
            <person name="Barrell B.G."/>
            <person name="Denning D.W."/>
        </authorList>
    </citation>
    <scope>NUCLEOTIDE SEQUENCE [LARGE SCALE GENOMIC DNA]</scope>
    <source>
        <strain>ATCC MYA-4609 / CBS 101355 / FGSC A1100 / Af293</strain>
    </source>
</reference>
<gene>
    <name type="primary">faeB-2</name>
    <name type="ORF">AFUA_6G09040</name>
</gene>
<comment type="function">
    <text evidence="3">Involved in degradation of plant cell walls. Hydrolyzes the feruloyl-arabinose ester bond in arabinoxylans as well as the feruloyl-galactose and feruloyl-arabinose ester bonds in pectin.</text>
</comment>
<comment type="catalytic activity">
    <reaction evidence="3">
        <text>feruloyl-polysaccharide + H2O = ferulate + polysaccharide.</text>
        <dbReference type="EC" id="3.1.1.73"/>
    </reaction>
</comment>
<comment type="subcellular location">
    <subcellularLocation>
        <location evidence="1">Secreted</location>
    </subcellularLocation>
</comment>
<comment type="similarity">
    <text evidence="5">Belongs to the tannase family.</text>
</comment>
<sequence length="526" mass="57865">MTKLSLLPLLTLASAVLAKQDAFQAKCASFGRKIKLPNVHVNFVEYVPGGTNLTLPDNDVTCGASSQVVSADMCRVAMAVDTSKSSQITLEAWFPREYTGRFLSTGNGGLSGCIQYYDLAYTAGLGFATVGANNGHNGTSGKPFYQHPEVIEDFAYRSIHTGVVVGKQLTKMFYKEGFDKSYYLGCSTGGRQGFKSIQKYPNDFDGVVAGAPAFNFVNLISWSIHFYSITGSNTSDTYLSPESWKVVHDEIVRQCDEIDGAKDGIIEDTDLCQPVIETIICKPGASDKTNCITGAQAKTVRNVLSPFYGVNGNLLYPRMQPGSELFASSVVYNGQPFRYSTDWYRYVVYNNPDWDATKWTVEDAAVALAQNPYNIQTWDADISSFQKAGGKVLTYHGMQDQLISSDNSKLYYARVAEEMGLGPEELDDFYRFFPVSGMAHCTGGDGAYGIGNGLRTYNGAEPENNVLMAMVQWVEKGIAPEFIRGAKFSNGVGSSVEYTRKHCRYPRRNVYKGPGNYSDENAWECV</sequence>
<evidence type="ECO:0000250" key="1"/>
<evidence type="ECO:0000250" key="2">
    <source>
        <dbReference type="UniProtKB" id="Q2UP89"/>
    </source>
</evidence>
<evidence type="ECO:0000250" key="3">
    <source>
        <dbReference type="UniProtKB" id="Q8WZI8"/>
    </source>
</evidence>
<evidence type="ECO:0000255" key="4"/>
<evidence type="ECO:0000305" key="5"/>
<dbReference type="EC" id="3.1.1.73" evidence="3"/>
<dbReference type="EMBL" id="AAHF01000006">
    <property type="protein sequence ID" value="EAL88754.1"/>
    <property type="molecule type" value="Genomic_DNA"/>
</dbReference>
<dbReference type="RefSeq" id="XP_750792.1">
    <property type="nucleotide sequence ID" value="XM_745699.1"/>
</dbReference>
<dbReference type="SMR" id="Q4WMR0"/>
<dbReference type="STRING" id="330879.Q4WMR0"/>
<dbReference type="ESTHER" id="aspfu-q4wmr0">
    <property type="family name" value="Tannase"/>
</dbReference>
<dbReference type="GlyCosmos" id="Q4WMR0">
    <property type="glycosylation" value="4 sites, No reported glycans"/>
</dbReference>
<dbReference type="EnsemblFungi" id="EAL88754">
    <property type="protein sequence ID" value="EAL88754"/>
    <property type="gene ID" value="AFUA_6G09040"/>
</dbReference>
<dbReference type="GeneID" id="3508081"/>
<dbReference type="KEGG" id="afm:AFUA_6G09040"/>
<dbReference type="VEuPathDB" id="FungiDB:Afu6g09040"/>
<dbReference type="eggNOG" id="ENOG502QPXZ">
    <property type="taxonomic scope" value="Eukaryota"/>
</dbReference>
<dbReference type="HOGENOM" id="CLU_014819_1_0_1"/>
<dbReference type="InParanoid" id="Q4WMR0"/>
<dbReference type="OMA" id="AWFPREY"/>
<dbReference type="OrthoDB" id="3039123at2759"/>
<dbReference type="Proteomes" id="UP000002530">
    <property type="component" value="Chromosome 6"/>
</dbReference>
<dbReference type="GO" id="GO:0005576">
    <property type="term" value="C:extracellular region"/>
    <property type="evidence" value="ECO:0007669"/>
    <property type="project" value="UniProtKB-SubCell"/>
</dbReference>
<dbReference type="GO" id="GO:0052689">
    <property type="term" value="F:carboxylic ester hydrolase activity"/>
    <property type="evidence" value="ECO:0000318"/>
    <property type="project" value="GO_Central"/>
</dbReference>
<dbReference type="GO" id="GO:0030600">
    <property type="term" value="F:feruloyl esterase activity"/>
    <property type="evidence" value="ECO:0007669"/>
    <property type="project" value="UniProtKB-EC"/>
</dbReference>
<dbReference type="GO" id="GO:0046872">
    <property type="term" value="F:metal ion binding"/>
    <property type="evidence" value="ECO:0007669"/>
    <property type="project" value="UniProtKB-KW"/>
</dbReference>
<dbReference type="GO" id="GO:0045493">
    <property type="term" value="P:xylan catabolic process"/>
    <property type="evidence" value="ECO:0007669"/>
    <property type="project" value="UniProtKB-KW"/>
</dbReference>
<dbReference type="Gene3D" id="3.40.50.1820">
    <property type="entry name" value="alpha/beta hydrolase"/>
    <property type="match status" value="1"/>
</dbReference>
<dbReference type="InterPro" id="IPR029058">
    <property type="entry name" value="AB_hydrolase_fold"/>
</dbReference>
<dbReference type="InterPro" id="IPR011118">
    <property type="entry name" value="Tannase/feruloyl_esterase"/>
</dbReference>
<dbReference type="PANTHER" id="PTHR33938">
    <property type="entry name" value="FERULOYL ESTERASE B-RELATED"/>
    <property type="match status" value="1"/>
</dbReference>
<dbReference type="PANTHER" id="PTHR33938:SF15">
    <property type="entry name" value="FERULOYL ESTERASE B-RELATED"/>
    <property type="match status" value="1"/>
</dbReference>
<dbReference type="Pfam" id="PF07519">
    <property type="entry name" value="Tannase"/>
    <property type="match status" value="2"/>
</dbReference>
<dbReference type="SUPFAM" id="SSF53474">
    <property type="entry name" value="alpha/beta-Hydrolases"/>
    <property type="match status" value="1"/>
</dbReference>
<protein>
    <recommendedName>
        <fullName>Probable feruloyl esterase B-2</fullName>
        <ecNumber evidence="3">3.1.1.73</ecNumber>
    </recommendedName>
    <alternativeName>
        <fullName>Ferulic acid esterase B-2</fullName>
        <shortName>FAEB-2</shortName>
    </alternativeName>
</protein>
<accession>Q4WMR0</accession>
<organism>
    <name type="scientific">Aspergillus fumigatus (strain ATCC MYA-4609 / CBS 101355 / FGSC A1100 / Af293)</name>
    <name type="common">Neosartorya fumigata</name>
    <dbReference type="NCBI Taxonomy" id="330879"/>
    <lineage>
        <taxon>Eukaryota</taxon>
        <taxon>Fungi</taxon>
        <taxon>Dikarya</taxon>
        <taxon>Ascomycota</taxon>
        <taxon>Pezizomycotina</taxon>
        <taxon>Eurotiomycetes</taxon>
        <taxon>Eurotiomycetidae</taxon>
        <taxon>Eurotiales</taxon>
        <taxon>Aspergillaceae</taxon>
        <taxon>Aspergillus</taxon>
        <taxon>Aspergillus subgen. Fumigati</taxon>
    </lineage>
</organism>
<name>FAEB2_ASPFU</name>